<evidence type="ECO:0000269" key="1">
    <source>
    </source>
</evidence>
<evidence type="ECO:0000269" key="2">
    <source>
    </source>
</evidence>
<evidence type="ECO:0000269" key="3">
    <source>
    </source>
</evidence>
<evidence type="ECO:0007829" key="4">
    <source>
        <dbReference type="PDB" id="4GQ2"/>
    </source>
</evidence>
<reference key="1">
    <citation type="journal article" date="2002" name="Nature">
        <title>The genome sequence of Schizosaccharomyces pombe.</title>
        <authorList>
            <person name="Wood V."/>
            <person name="Gwilliam R."/>
            <person name="Rajandream M.A."/>
            <person name="Lyne M.H."/>
            <person name="Lyne R."/>
            <person name="Stewart A."/>
            <person name="Sgouros J.G."/>
            <person name="Peat N."/>
            <person name="Hayles J."/>
            <person name="Baker S.G."/>
            <person name="Basham D."/>
            <person name="Bowman S."/>
            <person name="Brooks K."/>
            <person name="Brown D."/>
            <person name="Brown S."/>
            <person name="Chillingworth T."/>
            <person name="Churcher C.M."/>
            <person name="Collins M."/>
            <person name="Connor R."/>
            <person name="Cronin A."/>
            <person name="Davis P."/>
            <person name="Feltwell T."/>
            <person name="Fraser A."/>
            <person name="Gentles S."/>
            <person name="Goble A."/>
            <person name="Hamlin N."/>
            <person name="Harris D.E."/>
            <person name="Hidalgo J."/>
            <person name="Hodgson G."/>
            <person name="Holroyd S."/>
            <person name="Hornsby T."/>
            <person name="Howarth S."/>
            <person name="Huckle E.J."/>
            <person name="Hunt S."/>
            <person name="Jagels K."/>
            <person name="James K.D."/>
            <person name="Jones L."/>
            <person name="Jones M."/>
            <person name="Leather S."/>
            <person name="McDonald S."/>
            <person name="McLean J."/>
            <person name="Mooney P."/>
            <person name="Moule S."/>
            <person name="Mungall K.L."/>
            <person name="Murphy L.D."/>
            <person name="Niblett D."/>
            <person name="Odell C."/>
            <person name="Oliver K."/>
            <person name="O'Neil S."/>
            <person name="Pearson D."/>
            <person name="Quail M.A."/>
            <person name="Rabbinowitsch E."/>
            <person name="Rutherford K.M."/>
            <person name="Rutter S."/>
            <person name="Saunders D."/>
            <person name="Seeger K."/>
            <person name="Sharp S."/>
            <person name="Skelton J."/>
            <person name="Simmonds M.N."/>
            <person name="Squares R."/>
            <person name="Squares S."/>
            <person name="Stevens K."/>
            <person name="Taylor K."/>
            <person name="Taylor R.G."/>
            <person name="Tivey A."/>
            <person name="Walsh S.V."/>
            <person name="Warren T."/>
            <person name="Whitehead S."/>
            <person name="Woodward J.R."/>
            <person name="Volckaert G."/>
            <person name="Aert R."/>
            <person name="Robben J."/>
            <person name="Grymonprez B."/>
            <person name="Weltjens I."/>
            <person name="Vanstreels E."/>
            <person name="Rieger M."/>
            <person name="Schaefer M."/>
            <person name="Mueller-Auer S."/>
            <person name="Gabel C."/>
            <person name="Fuchs M."/>
            <person name="Duesterhoeft A."/>
            <person name="Fritzc C."/>
            <person name="Holzer E."/>
            <person name="Moestl D."/>
            <person name="Hilbert H."/>
            <person name="Borzym K."/>
            <person name="Langer I."/>
            <person name="Beck A."/>
            <person name="Lehrach H."/>
            <person name="Reinhardt R."/>
            <person name="Pohl T.M."/>
            <person name="Eger P."/>
            <person name="Zimmermann W."/>
            <person name="Wedler H."/>
            <person name="Wambutt R."/>
            <person name="Purnelle B."/>
            <person name="Goffeau A."/>
            <person name="Cadieu E."/>
            <person name="Dreano S."/>
            <person name="Gloux S."/>
            <person name="Lelaure V."/>
            <person name="Mottier S."/>
            <person name="Galibert F."/>
            <person name="Aves S.J."/>
            <person name="Xiang Z."/>
            <person name="Hunt C."/>
            <person name="Moore K."/>
            <person name="Hurst S.M."/>
            <person name="Lucas M."/>
            <person name="Rochet M."/>
            <person name="Gaillardin C."/>
            <person name="Tallada V.A."/>
            <person name="Garzon A."/>
            <person name="Thode G."/>
            <person name="Daga R.R."/>
            <person name="Cruzado L."/>
            <person name="Jimenez J."/>
            <person name="Sanchez M."/>
            <person name="del Rey F."/>
            <person name="Benito J."/>
            <person name="Dominguez A."/>
            <person name="Revuelta J.L."/>
            <person name="Moreno S."/>
            <person name="Armstrong J."/>
            <person name="Forsburg S.L."/>
            <person name="Cerutti L."/>
            <person name="Lowe T."/>
            <person name="McCombie W.R."/>
            <person name="Paulsen I."/>
            <person name="Potashkin J."/>
            <person name="Shpakovski G.V."/>
            <person name="Ussery D."/>
            <person name="Barrell B.G."/>
            <person name="Nurse P."/>
        </authorList>
    </citation>
    <scope>NUCLEOTIDE SEQUENCE [LARGE SCALE GENOMIC DNA]</scope>
    <source>
        <strain>972 / ATCC 24843</strain>
    </source>
</reference>
<reference key="2">
    <citation type="journal article" date="2004" name="Mol. Cell. Biol.">
        <title>The fission yeast Nup107-120 complex functionally interacts with the small GTPase Ran/Spi1 and is required for mRNA export, nuclear pore distribution, and proper cell division.</title>
        <authorList>
            <person name="Bai S.W."/>
            <person name="Rouquette J."/>
            <person name="Umeda M."/>
            <person name="Faigle W."/>
            <person name="Loew D."/>
            <person name="Sazer S."/>
            <person name="Doye V."/>
        </authorList>
    </citation>
    <scope>IDENTIFICATION IN NUP107-120 COMPLEX</scope>
    <scope>INTERACTION WITH NUP107</scope>
    <scope>SUBCELLULAR LOCATION</scope>
</reference>
<reference key="3">
    <citation type="journal article" date="2004" name="Yeast">
        <title>Identification of genes encoding putative nucleoporins and transport factors in the fission yeast Schizosaccharomyces pombe: a deletion analysis.</title>
        <authorList>
            <person name="Chen X.Q."/>
            <person name="Du X."/>
            <person name="Liu J."/>
            <person name="Balasubramanian M.K."/>
            <person name="Balasundaram D."/>
        </authorList>
    </citation>
    <scope>FUNCTION</scope>
    <scope>SUBCELLULAR LOCATION</scope>
</reference>
<reference key="4">
    <citation type="journal article" date="2006" name="Nat. Biotechnol.">
        <title>ORFeome cloning and global analysis of protein localization in the fission yeast Schizosaccharomyces pombe.</title>
        <authorList>
            <person name="Matsuyama A."/>
            <person name="Arai R."/>
            <person name="Yashiroda Y."/>
            <person name="Shirai A."/>
            <person name="Kamata A."/>
            <person name="Sekido S."/>
            <person name="Kobayashi Y."/>
            <person name="Hashimoto A."/>
            <person name="Hamamoto M."/>
            <person name="Hiraoka Y."/>
            <person name="Horinouchi S."/>
            <person name="Yoshida M."/>
        </authorList>
    </citation>
    <scope>SUBCELLULAR LOCATION [LARGE SCALE ANALYSIS]</scope>
</reference>
<protein>
    <recommendedName>
        <fullName>Nucleoporin nup120</fullName>
    </recommendedName>
    <alternativeName>
        <fullName>Nuclear pore protein nup120</fullName>
    </alternativeName>
</protein>
<name>NU120_SCHPO</name>
<sequence length="1136" mass="129783">MNELKHAVVPIDLQSFCLEGTLALWVPALENDSEDDSEAIETADDNEKLFKKECVAYDAGVYTSNKSKGSQTLRWSIFQNRTLTIFDVSLNSKKEPLSKFNVKIHFPSNVMKDGVAFSFSEHSDTTIIYAITHARVLYYIRLSKTWFQLPDARLDDDWCLCYRPISFLNQKPDLMAAISTSEICVSFFNGGLTKIILNPKDASHYEQHIDDSSYLFSLKKYLSLQAFKADYRSPNTIISMIFLSTYNVLVMLSLDYKLKVLDLSTNQCVETIELSQTILPLQSFPYLTSDHTTNSFIALYYPDNSHGSFSIYKLNANAHSFKLNVVIEKGIIPPSLPDDEFIPWMLSDFQLISSEGSQSKFLLIIAWKSNLNTVIQKCNLSLDQDESFSCVWSHSLDSFSLIEKTFFDVPTNMSSGDISEIWLQHIFAHNTSIESIQVALLSFQNSSSQVSKNKLDKFGALTISELKNAVLSSIVSTIQIEPNSDLTGYDYYEYKRLLYNEWERFAKLVAYLDHFGDEILSINFDPSNAVTYINYANKVAFIRDPYLIESFDEEPLTKLISSLETDDPSLIEGYQILDLGRSLHSCMSFSTLSEIRYSLRELVQDLPSYSLFDTLWVFYDKHIYPNVDPDYISTLIDTLVSLENPMRDIDSLIQRLRSFDIYNHSAQSPSLFLCASVARVLDSILKKFQVSIEGFIFLLSLITSQQDYELQSKFAGCDKLFLSLLEDWRLVSFLLENSALLLEKFEEEDVDSTNCNLNTMEALASVNTALQFFSALNYSECFSESQISPLHATVISSLSAIFIRDDTENDLVTELVEKLFLFKQYNACMQLIGWLNSDPIAVYLKALIYLKSKEAVKAVRCFKTTSLVLYSHTSQFAVLREFQEIAEKYHHQNLLSCYYLHLSKKLFEESAYIDALEFSLLADASKETDDEDLSIAITHETLKTACAAGKFDAAHVALMVLSTTPLKKSCLLDFVNQLTKQGKINQLLNYSMPTLRQDVDNLLERKAFQMINVESQPCWYNILFSWRYKHQNYRDAAAIIYEKLSRYISTTELIGKKERTFIIEHYLIVLNTLELLPKEDTWILVTDMSVDKEPDPNFLPQKLLTLDAIVAEYHLQLKDVAVQVTAEMSSAMNIDL</sequence>
<keyword id="KW-0002">3D-structure</keyword>
<keyword id="KW-0539">Nucleus</keyword>
<keyword id="KW-1185">Reference proteome</keyword>
<keyword id="KW-0813">Transport</keyword>
<organism>
    <name type="scientific">Schizosaccharomyces pombe (strain 972 / ATCC 24843)</name>
    <name type="common">Fission yeast</name>
    <dbReference type="NCBI Taxonomy" id="284812"/>
    <lineage>
        <taxon>Eukaryota</taxon>
        <taxon>Fungi</taxon>
        <taxon>Dikarya</taxon>
        <taxon>Ascomycota</taxon>
        <taxon>Taphrinomycotina</taxon>
        <taxon>Schizosaccharomycetes</taxon>
        <taxon>Schizosaccharomycetales</taxon>
        <taxon>Schizosaccharomycetaceae</taxon>
        <taxon>Schizosaccharomyces</taxon>
    </lineage>
</organism>
<comment type="function">
    <text evidence="1">Functions as a component of the nuclear pore complex (NPC). NPC components, collectively referred to as nucleoporins (NUPs), can play the role of both NPC structural components and of docking or interaction partners for transiently associated nuclear transport factors. Active directional transport is assured by both, a Phe-Gly (FG) repeat affinity gradient for these transport factors across the NPC and a transport cofactor concentration gradient across the nuclear envelope.</text>
</comment>
<comment type="subunit">
    <text evidence="2">Component of the npc107-120 complex which consists of nup85, nup107, nup120, nup131, nup132 and seh1. Interacts with nup107.</text>
</comment>
<comment type="interaction">
    <interactant intactId="EBI-1563733">
        <id>O43044</id>
    </interactant>
    <interactant intactId="EBI-16014622">
        <id>O36030</id>
        <label>SPAC4F10.18</label>
    </interactant>
    <organismsDiffer>false</organismsDiffer>
    <experiments>3</experiments>
</comment>
<comment type="subcellular location">
    <subcellularLocation>
        <location evidence="1 2 3">Nucleus</location>
    </subcellularLocation>
    <text>Nuclear rim.</text>
</comment>
<feature type="chain" id="PRO_0000290667" description="Nucleoporin nup120">
    <location>
        <begin position="1"/>
        <end position="1136"/>
    </location>
</feature>
<feature type="strand" evidence="4">
    <location>
        <begin position="5"/>
        <end position="10"/>
    </location>
</feature>
<feature type="turn" evidence="4">
    <location>
        <begin position="13"/>
        <end position="17"/>
    </location>
</feature>
<feature type="strand" evidence="4">
    <location>
        <begin position="20"/>
        <end position="25"/>
    </location>
</feature>
<feature type="helix" evidence="4">
    <location>
        <begin position="45"/>
        <end position="54"/>
    </location>
</feature>
<feature type="strand" evidence="4">
    <location>
        <begin position="57"/>
        <end position="63"/>
    </location>
</feature>
<feature type="strand" evidence="4">
    <location>
        <begin position="67"/>
        <end position="69"/>
    </location>
</feature>
<feature type="strand" evidence="4">
    <location>
        <begin position="72"/>
        <end position="78"/>
    </location>
</feature>
<feature type="turn" evidence="4">
    <location>
        <begin position="79"/>
        <end position="81"/>
    </location>
</feature>
<feature type="strand" evidence="4">
    <location>
        <begin position="82"/>
        <end position="87"/>
    </location>
</feature>
<feature type="strand" evidence="4">
    <location>
        <begin position="100"/>
        <end position="105"/>
    </location>
</feature>
<feature type="strand" evidence="4">
    <location>
        <begin position="110"/>
        <end position="120"/>
    </location>
</feature>
<feature type="helix" evidence="4">
    <location>
        <begin position="122"/>
        <end position="124"/>
    </location>
</feature>
<feature type="strand" evidence="4">
    <location>
        <begin position="125"/>
        <end position="132"/>
    </location>
</feature>
<feature type="strand" evidence="4">
    <location>
        <begin position="137"/>
        <end position="142"/>
    </location>
</feature>
<feature type="helix" evidence="4">
    <location>
        <begin position="145"/>
        <end position="148"/>
    </location>
</feature>
<feature type="strand" evidence="4">
    <location>
        <begin position="158"/>
        <end position="162"/>
    </location>
</feature>
<feature type="helix" evidence="4">
    <location>
        <begin position="165"/>
        <end position="167"/>
    </location>
</feature>
<feature type="strand" evidence="4">
    <location>
        <begin position="172"/>
        <end position="177"/>
    </location>
</feature>
<feature type="strand" evidence="4">
    <location>
        <begin position="179"/>
        <end position="187"/>
    </location>
</feature>
<feature type="strand" evidence="4">
    <location>
        <begin position="192"/>
        <end position="197"/>
    </location>
</feature>
<feature type="turn" evidence="4">
    <location>
        <begin position="199"/>
        <end position="201"/>
    </location>
</feature>
<feature type="strand" evidence="4">
    <location>
        <begin position="204"/>
        <end position="209"/>
    </location>
</feature>
<feature type="strand" evidence="4">
    <location>
        <begin position="237"/>
        <end position="243"/>
    </location>
</feature>
<feature type="turn" evidence="4">
    <location>
        <begin position="244"/>
        <end position="247"/>
    </location>
</feature>
<feature type="strand" evidence="4">
    <location>
        <begin position="248"/>
        <end position="253"/>
    </location>
</feature>
<feature type="strand" evidence="4">
    <location>
        <begin position="257"/>
        <end position="262"/>
    </location>
</feature>
<feature type="turn" evidence="4">
    <location>
        <begin position="263"/>
        <end position="266"/>
    </location>
</feature>
<feature type="strand" evidence="4">
    <location>
        <begin position="267"/>
        <end position="273"/>
    </location>
</feature>
<feature type="strand" evidence="4">
    <location>
        <begin position="287"/>
        <end position="289"/>
    </location>
</feature>
<feature type="strand" evidence="4">
    <location>
        <begin position="291"/>
        <end position="293"/>
    </location>
</feature>
<feature type="strand" evidence="4">
    <location>
        <begin position="296"/>
        <end position="301"/>
    </location>
</feature>
<feature type="strand" evidence="4">
    <location>
        <begin position="304"/>
        <end position="306"/>
    </location>
</feature>
<feature type="strand" evidence="4">
    <location>
        <begin position="308"/>
        <end position="316"/>
    </location>
</feature>
<feature type="strand" evidence="4">
    <location>
        <begin position="323"/>
        <end position="328"/>
    </location>
</feature>
<feature type="strand" evidence="4">
    <location>
        <begin position="345"/>
        <end position="353"/>
    </location>
</feature>
<feature type="strand" evidence="4">
    <location>
        <begin position="358"/>
        <end position="369"/>
    </location>
</feature>
<feature type="strand" evidence="4">
    <location>
        <begin position="372"/>
        <end position="381"/>
    </location>
</feature>
<feature type="strand" evidence="4">
    <location>
        <begin position="389"/>
        <end position="394"/>
    </location>
</feature>
<feature type="helix" evidence="4">
    <location>
        <begin position="418"/>
        <end position="427"/>
    </location>
</feature>
<feature type="helix" evidence="4">
    <location>
        <begin position="433"/>
        <end position="442"/>
    </location>
</feature>
<feature type="helix" evidence="4">
    <location>
        <begin position="452"/>
        <end position="458"/>
    </location>
</feature>
<feature type="helix" evidence="4">
    <location>
        <begin position="463"/>
        <end position="477"/>
    </location>
</feature>
<feature type="strand" evidence="4">
    <location>
        <begin position="484"/>
        <end position="489"/>
    </location>
</feature>
<feature type="helix" evidence="4">
    <location>
        <begin position="491"/>
        <end position="514"/>
    </location>
</feature>
<feature type="helix" evidence="4">
    <location>
        <begin position="515"/>
        <end position="517"/>
    </location>
</feature>
<feature type="strand" evidence="4">
    <location>
        <begin position="519"/>
        <end position="524"/>
    </location>
</feature>
<feature type="strand" evidence="4">
    <location>
        <begin position="526"/>
        <end position="529"/>
    </location>
</feature>
<feature type="strand" evidence="4">
    <location>
        <begin position="531"/>
        <end position="543"/>
    </location>
</feature>
<feature type="helix" evidence="4">
    <location>
        <begin position="547"/>
        <end position="552"/>
    </location>
</feature>
<feature type="helix" evidence="4">
    <location>
        <begin position="556"/>
        <end position="560"/>
    </location>
</feature>
<feature type="helix" evidence="4">
    <location>
        <begin position="570"/>
        <end position="584"/>
    </location>
</feature>
<feature type="helix" evidence="4">
    <location>
        <begin position="589"/>
        <end position="604"/>
    </location>
</feature>
<feature type="helix" evidence="4">
    <location>
        <begin position="611"/>
        <end position="622"/>
    </location>
</feature>
<feature type="helix" evidence="4">
    <location>
        <begin position="624"/>
        <end position="626"/>
    </location>
</feature>
<feature type="helix" evidence="4">
    <location>
        <begin position="629"/>
        <end position="640"/>
    </location>
</feature>
<feature type="strand" evidence="4">
    <location>
        <begin position="642"/>
        <end position="644"/>
    </location>
</feature>
<feature type="helix" evidence="4">
    <location>
        <begin position="645"/>
        <end position="657"/>
    </location>
</feature>
<feature type="helix" evidence="4">
    <location>
        <begin position="671"/>
        <end position="702"/>
    </location>
</feature>
<feature type="helix" evidence="4">
    <location>
        <begin position="708"/>
        <end position="712"/>
    </location>
</feature>
<feature type="turn" evidence="4">
    <location>
        <begin position="713"/>
        <end position="717"/>
    </location>
</feature>
<feature type="helix" evidence="4">
    <location>
        <begin position="718"/>
        <end position="738"/>
    </location>
</feature>
<feature type="helix" evidence="4">
    <location>
        <begin position="762"/>
        <end position="764"/>
    </location>
</feature>
<feature type="helix" evidence="4">
    <location>
        <begin position="769"/>
        <end position="776"/>
    </location>
</feature>
<feature type="strand" evidence="4">
    <location>
        <begin position="785"/>
        <end position="787"/>
    </location>
</feature>
<feature type="helix" evidence="4">
    <location>
        <begin position="789"/>
        <end position="802"/>
    </location>
</feature>
<feature type="strand" evidence="4">
    <location>
        <begin position="806"/>
        <end position="808"/>
    </location>
</feature>
<feature type="helix" evidence="4">
    <location>
        <begin position="811"/>
        <end position="821"/>
    </location>
</feature>
<feature type="helix" evidence="4">
    <location>
        <begin position="825"/>
        <end position="831"/>
    </location>
</feature>
<feature type="helix" evidence="4">
    <location>
        <begin position="832"/>
        <end position="834"/>
    </location>
</feature>
<feature type="helix" evidence="4">
    <location>
        <begin position="839"/>
        <end position="851"/>
    </location>
</feature>
<feature type="helix" evidence="4">
    <location>
        <begin position="855"/>
        <end position="863"/>
    </location>
</feature>
<feature type="helix" evidence="4">
    <location>
        <begin position="877"/>
        <end position="879"/>
    </location>
</feature>
<feature type="helix" evidence="4">
    <location>
        <begin position="880"/>
        <end position="888"/>
    </location>
</feature>
<feature type="turn" evidence="4">
    <location>
        <begin position="889"/>
        <end position="891"/>
    </location>
</feature>
<feature type="helix" evidence="4">
    <location>
        <begin position="894"/>
        <end position="908"/>
    </location>
</feature>
<feature type="helix" evidence="4">
    <location>
        <begin position="912"/>
        <end position="924"/>
    </location>
</feature>
<feature type="helix" evidence="4">
    <location>
        <begin position="931"/>
        <end position="948"/>
    </location>
</feature>
<accession>O43044</accession>
<gene>
    <name type="primary">nup120</name>
    <name type="ORF">SPBC3B9.16c</name>
</gene>
<dbReference type="EMBL" id="CU329671">
    <property type="protein sequence ID" value="CAA17796.1"/>
    <property type="molecule type" value="Genomic_DNA"/>
</dbReference>
<dbReference type="PIR" id="T40355">
    <property type="entry name" value="T40355"/>
</dbReference>
<dbReference type="RefSeq" id="NP_596674.1">
    <property type="nucleotide sequence ID" value="NM_001022596.2"/>
</dbReference>
<dbReference type="PDB" id="4FHM">
    <property type="method" value="X-ray"/>
    <property type="resolution" value="4.34 A"/>
    <property type="chains" value="B=1-961"/>
</dbReference>
<dbReference type="PDB" id="4FHN">
    <property type="method" value="X-ray"/>
    <property type="resolution" value="6.99 A"/>
    <property type="chains" value="B/D=1-1136"/>
</dbReference>
<dbReference type="PDB" id="4GQ2">
    <property type="method" value="X-ray"/>
    <property type="resolution" value="2.40 A"/>
    <property type="chains" value="M=1-949"/>
</dbReference>
<dbReference type="PDBsum" id="4FHM"/>
<dbReference type="PDBsum" id="4FHN"/>
<dbReference type="PDBsum" id="4GQ2"/>
<dbReference type="SMR" id="O43044"/>
<dbReference type="BioGRID" id="277033">
    <property type="interactions" value="6"/>
</dbReference>
<dbReference type="DIP" id="DIP-38661N"/>
<dbReference type="FunCoup" id="O43044">
    <property type="interactions" value="79"/>
</dbReference>
<dbReference type="IntAct" id="O43044">
    <property type="interactions" value="3"/>
</dbReference>
<dbReference type="STRING" id="284812.O43044"/>
<dbReference type="SwissPalm" id="O43044"/>
<dbReference type="PaxDb" id="4896-SPBC3B9.16c.1"/>
<dbReference type="EnsemblFungi" id="SPBC3B9.16c.1">
    <property type="protein sequence ID" value="SPBC3B9.16c.1:pep"/>
    <property type="gene ID" value="SPBC3B9.16c"/>
</dbReference>
<dbReference type="GeneID" id="2540505"/>
<dbReference type="KEGG" id="spo:2540505"/>
<dbReference type="PomBase" id="SPBC3B9.16c">
    <property type="gene designation" value="nup120"/>
</dbReference>
<dbReference type="VEuPathDB" id="FungiDB:SPBC3B9.16c"/>
<dbReference type="eggNOG" id="ENOG502QQWQ">
    <property type="taxonomic scope" value="Eukaryota"/>
</dbReference>
<dbReference type="HOGENOM" id="CLU_277873_0_0_1"/>
<dbReference type="InParanoid" id="O43044"/>
<dbReference type="OMA" id="TAICTHT"/>
<dbReference type="PhylomeDB" id="O43044"/>
<dbReference type="Reactome" id="R-SPO-159227">
    <property type="pathway name" value="Transport of the SLBP independent Mature mRNA"/>
</dbReference>
<dbReference type="Reactome" id="R-SPO-159231">
    <property type="pathway name" value="Transport of Mature mRNA Derived from an Intronless Transcript"/>
</dbReference>
<dbReference type="Reactome" id="R-SPO-159236">
    <property type="pathway name" value="Transport of Mature mRNA derived from an Intron-Containing Transcript"/>
</dbReference>
<dbReference type="Reactome" id="R-SPO-3371453">
    <property type="pathway name" value="Regulation of HSF1-mediated heat shock response"/>
</dbReference>
<dbReference type="Reactome" id="R-SPO-4085377">
    <property type="pathway name" value="SUMOylation of SUMOylation proteins"/>
</dbReference>
<dbReference type="Reactome" id="R-SPO-4551638">
    <property type="pathway name" value="SUMOylation of chromatin organization proteins"/>
</dbReference>
<dbReference type="Reactome" id="R-SPO-4570464">
    <property type="pathway name" value="SUMOylation of RNA binding proteins"/>
</dbReference>
<dbReference type="Reactome" id="R-SPO-5578749">
    <property type="pathway name" value="Transcriptional regulation by small RNAs"/>
</dbReference>
<dbReference type="Reactome" id="R-SPO-9615933">
    <property type="pathway name" value="Postmitotic nuclear pore complex (NPC) reformation"/>
</dbReference>
<dbReference type="EvolutionaryTrace" id="O43044"/>
<dbReference type="PRO" id="PR:O43044"/>
<dbReference type="Proteomes" id="UP000002485">
    <property type="component" value="Chromosome II"/>
</dbReference>
<dbReference type="GO" id="GO:0005635">
    <property type="term" value="C:nuclear envelope"/>
    <property type="evidence" value="ECO:0007005"/>
    <property type="project" value="PomBase"/>
</dbReference>
<dbReference type="GO" id="GO:0034399">
    <property type="term" value="C:nuclear periphery"/>
    <property type="evidence" value="ECO:0000314"/>
    <property type="project" value="PomBase"/>
</dbReference>
<dbReference type="GO" id="GO:0005643">
    <property type="term" value="C:nuclear pore"/>
    <property type="evidence" value="ECO:0000314"/>
    <property type="project" value="PomBase"/>
</dbReference>
<dbReference type="GO" id="GO:0031080">
    <property type="term" value="C:nuclear pore outer ring"/>
    <property type="evidence" value="ECO:0000314"/>
    <property type="project" value="PomBase"/>
</dbReference>
<dbReference type="GO" id="GO:0017056">
    <property type="term" value="F:structural constituent of nuclear pore"/>
    <property type="evidence" value="ECO:0000318"/>
    <property type="project" value="GO_Central"/>
</dbReference>
<dbReference type="GO" id="GO:0016973">
    <property type="term" value="P:poly(A)+ mRNA export from nucleus"/>
    <property type="evidence" value="ECO:0000315"/>
    <property type="project" value="PomBase"/>
</dbReference>
<dbReference type="IDEAL" id="IID50302"/>
<dbReference type="InterPro" id="IPR056548">
    <property type="entry name" value="HEAT_Nup120"/>
</dbReference>
<dbReference type="InterPro" id="IPR021717">
    <property type="entry name" value="Nucleoporin_Nup160"/>
</dbReference>
<dbReference type="InterPro" id="IPR048884">
    <property type="entry name" value="Nup120_helical"/>
</dbReference>
<dbReference type="PANTHER" id="PTHR21286">
    <property type="entry name" value="NUCLEAR PORE COMPLEX PROTEIN NUP160"/>
    <property type="match status" value="1"/>
</dbReference>
<dbReference type="PANTHER" id="PTHR21286:SF0">
    <property type="entry name" value="NUCLEAR PORE COMPLEX PROTEIN NUP160"/>
    <property type="match status" value="1"/>
</dbReference>
<dbReference type="Pfam" id="PF11715">
    <property type="entry name" value="Beta-prop_Nup120_160"/>
    <property type="match status" value="1"/>
</dbReference>
<dbReference type="Pfam" id="PF23300">
    <property type="entry name" value="HEAT_Nup120"/>
    <property type="match status" value="1"/>
</dbReference>
<dbReference type="Pfam" id="PF21486">
    <property type="entry name" value="NUP120_helical"/>
    <property type="match status" value="1"/>
</dbReference>
<proteinExistence type="evidence at protein level"/>